<organism>
    <name type="scientific">Rattus norvegicus</name>
    <name type="common">Rat</name>
    <dbReference type="NCBI Taxonomy" id="10116"/>
    <lineage>
        <taxon>Eukaryota</taxon>
        <taxon>Metazoa</taxon>
        <taxon>Chordata</taxon>
        <taxon>Craniata</taxon>
        <taxon>Vertebrata</taxon>
        <taxon>Euteleostomi</taxon>
        <taxon>Mammalia</taxon>
        <taxon>Eutheria</taxon>
        <taxon>Euarchontoglires</taxon>
        <taxon>Glires</taxon>
        <taxon>Rodentia</taxon>
        <taxon>Myomorpha</taxon>
        <taxon>Muroidea</taxon>
        <taxon>Muridae</taxon>
        <taxon>Murinae</taxon>
        <taxon>Rattus</taxon>
    </lineage>
</organism>
<evidence type="ECO:0000250" key="1">
    <source>
        <dbReference type="UniProtKB" id="Q9H6J7"/>
    </source>
</evidence>
<evidence type="ECO:0000256" key="2">
    <source>
        <dbReference type="SAM" id="MobiDB-lite"/>
    </source>
</evidence>
<evidence type="ECO:0000305" key="3"/>
<evidence type="ECO:0007744" key="4">
    <source>
    </source>
</evidence>
<name>CSTP1_RAT</name>
<dbReference type="EMBL" id="BC087159">
    <property type="protein sequence ID" value="AAH87159.1"/>
    <property type="molecule type" value="mRNA"/>
</dbReference>
<dbReference type="RefSeq" id="NP_001013940.1">
    <property type="nucleotide sequence ID" value="NM_001013918.2"/>
</dbReference>
<dbReference type="FunCoup" id="Q5M9F0">
    <property type="interactions" value="1910"/>
</dbReference>
<dbReference type="STRING" id="10116.ENSRNOP00000039464"/>
<dbReference type="GlyGen" id="Q5M9F0">
    <property type="glycosylation" value="1 site"/>
</dbReference>
<dbReference type="iPTMnet" id="Q5M9F0"/>
<dbReference type="PhosphoSitePlus" id="Q5M9F0"/>
<dbReference type="PaxDb" id="10116-ENSRNOP00000039464"/>
<dbReference type="Ensembl" id="ENSRNOT00000095774.1">
    <property type="protein sequence ID" value="ENSRNOP00000088632.1"/>
    <property type="gene ID" value="ENSRNOG00000014798.7"/>
</dbReference>
<dbReference type="GeneID" id="295930"/>
<dbReference type="KEGG" id="rno:295930"/>
<dbReference type="UCSC" id="RGD:1309540">
    <property type="organism name" value="rat"/>
</dbReference>
<dbReference type="AGR" id="RGD:1309540"/>
<dbReference type="CTD" id="79096"/>
<dbReference type="RGD" id="1309540">
    <property type="gene designation" value="Cstpp1"/>
</dbReference>
<dbReference type="eggNOG" id="ENOG502QRVN">
    <property type="taxonomic scope" value="Eukaryota"/>
</dbReference>
<dbReference type="GeneTree" id="ENSGT00390000012935"/>
<dbReference type="HOGENOM" id="CLU_064579_0_0_1"/>
<dbReference type="InParanoid" id="Q5M9F0"/>
<dbReference type="OrthoDB" id="27845at9989"/>
<dbReference type="PhylomeDB" id="Q5M9F0"/>
<dbReference type="TreeFam" id="TF329168"/>
<dbReference type="PRO" id="PR:Q5M9F0"/>
<dbReference type="Proteomes" id="UP000002494">
    <property type="component" value="Chromosome 3"/>
</dbReference>
<dbReference type="Bgee" id="ENSRNOG00000014798">
    <property type="expression patterns" value="Expressed in frontal cortex and 20 other cell types or tissues"/>
</dbReference>
<dbReference type="GO" id="GO:0034451">
    <property type="term" value="C:centriolar satellite"/>
    <property type="evidence" value="ECO:0000266"/>
    <property type="project" value="RGD"/>
</dbReference>
<dbReference type="GO" id="GO:0005737">
    <property type="term" value="C:cytoplasm"/>
    <property type="evidence" value="ECO:0007669"/>
    <property type="project" value="UniProtKB-KW"/>
</dbReference>
<dbReference type="GO" id="GO:0005874">
    <property type="term" value="C:microtubule"/>
    <property type="evidence" value="ECO:0007669"/>
    <property type="project" value="UniProtKB-KW"/>
</dbReference>
<dbReference type="GO" id="GO:0030674">
    <property type="term" value="F:protein-macromolecule adaptor activity"/>
    <property type="evidence" value="ECO:0000266"/>
    <property type="project" value="RGD"/>
</dbReference>
<dbReference type="GO" id="GO:0061635">
    <property type="term" value="P:regulation of protein complex stability"/>
    <property type="evidence" value="ECO:0000266"/>
    <property type="project" value="RGD"/>
</dbReference>
<dbReference type="CDD" id="cd22959">
    <property type="entry name" value="DD_C11orf49"/>
    <property type="match status" value="1"/>
</dbReference>
<dbReference type="InterPro" id="IPR038968">
    <property type="entry name" value="CSTPP1"/>
</dbReference>
<dbReference type="PANTHER" id="PTHR34252:SF1">
    <property type="entry name" value="CENTRIOLAR SATELLITE-ASSOCIATED TUBULIN POLYGLUTAMYLASE COMPLEX REGULATOR 1"/>
    <property type="match status" value="1"/>
</dbReference>
<dbReference type="PANTHER" id="PTHR34252">
    <property type="entry name" value="UPF0705 PROTEIN C11ORF49"/>
    <property type="match status" value="1"/>
</dbReference>
<sequence length="331" mass="37476">MLSPERLALPDYEYLAQRHVLTYMEDAVCQLLENKEDISQYGIARFFTEYFNSVCQGTHILFREFSFIQATPHNRASFLRAFWRCFRTVGKNGDLLTMREYHCLLQLLCPDFPLELTQKAARIVLMDDAMDCLMSFSDFLFAFQIQFYYSEFLESVAAIYQDLLSGKNPNTVIVPTSSSGQHRQRPALGDAGMLDGVEASLFCQRLENLCDRHKYSCPPPALVKEILSNVQRLTFYGFLVALSKHHGINQALGALPDKGDLMHDPAMDEELERLLVQVPGLVNSITATSEASCLPSRTPPRVGSPWKPLHRSRKLDAESDGSTEETDESET</sequence>
<keyword id="KW-0963">Cytoplasm</keyword>
<keyword id="KW-0206">Cytoskeleton</keyword>
<keyword id="KW-0493">Microtubule</keyword>
<keyword id="KW-0597">Phosphoprotein</keyword>
<keyword id="KW-1185">Reference proteome</keyword>
<gene>
    <name type="primary">Cstpp1</name>
</gene>
<feature type="chain" id="PRO_0000281429" description="Centriolar satellite-associated tubulin polyglutamylase complex regulator 1">
    <location>
        <begin position="1"/>
        <end position="331"/>
    </location>
</feature>
<feature type="region of interest" description="Required for interaction with TPGS1, LRRC49, and TTLL1" evidence="1">
    <location>
        <begin position="1"/>
        <end position="225"/>
    </location>
</feature>
<feature type="region of interest" description="Required for interaction with PCM1" evidence="1">
    <location>
        <begin position="1"/>
        <end position="111"/>
    </location>
</feature>
<feature type="region of interest" description="Required for interaction with TPGS2" evidence="1">
    <location>
        <begin position="112"/>
        <end position="331"/>
    </location>
</feature>
<feature type="region of interest" description="Disordered" evidence="2">
    <location>
        <begin position="292"/>
        <end position="331"/>
    </location>
</feature>
<feature type="compositionally biased region" description="Acidic residues" evidence="2">
    <location>
        <begin position="318"/>
        <end position="331"/>
    </location>
</feature>
<feature type="modified residue" description="Phosphoserine" evidence="4">
    <location>
        <position position="319"/>
    </location>
</feature>
<proteinExistence type="evidence at protein level"/>
<accession>Q5M9F0</accession>
<comment type="function">
    <text evidence="1">Regulator of the tubulin polyglutamylase complex (TPGC) that controls cytoskeletal organization, nuclear shape, and cilium disassembly by balancing microtubule and actin assembly. Regulates the assembly and stability of the TPGC and thereby modulates polyglutamylation of the microtubule, which antagonizes MAP4 binding.</text>
</comment>
<comment type="subunit">
    <text evidence="1">Interacts with PCM1. Interacts with TTLL1, TPGS1, TPGS2 and LRRC49; the interactions link CSTPP1 to the complex TPGC. Binds to alpha-tubulin.</text>
</comment>
<comment type="subcellular location">
    <subcellularLocation>
        <location evidence="1">Cytoplasm</location>
        <location evidence="1">Cytoskeleton</location>
        <location evidence="1">Microtubule organizing center</location>
        <location evidence="1">Centrosome</location>
        <location evidence="1">Centriolar satellite</location>
    </subcellularLocation>
    <subcellularLocation>
        <location evidence="1">Cytoplasm</location>
        <location evidence="1">Cytoskeleton</location>
    </subcellularLocation>
    <text evidence="1">Associated with microtubules.</text>
</comment>
<comment type="similarity">
    <text evidence="3">Belongs to the CSTPP1 family.</text>
</comment>
<protein>
    <recommendedName>
        <fullName>Centriolar satellite-associated tubulin polyglutamylase complex regulator 1</fullName>
    </recommendedName>
</protein>
<reference key="1">
    <citation type="journal article" date="2004" name="Genome Res.">
        <title>The status, quality, and expansion of the NIH full-length cDNA project: the Mammalian Gene Collection (MGC).</title>
        <authorList>
            <consortium name="The MGC Project Team"/>
        </authorList>
    </citation>
    <scope>NUCLEOTIDE SEQUENCE [LARGE SCALE MRNA]</scope>
    <source>
        <tissue>Testis</tissue>
    </source>
</reference>
<reference key="2">
    <citation type="journal article" date="2012" name="Nat. Commun.">
        <title>Quantitative maps of protein phosphorylation sites across 14 different rat organs and tissues.</title>
        <authorList>
            <person name="Lundby A."/>
            <person name="Secher A."/>
            <person name="Lage K."/>
            <person name="Nordsborg N.B."/>
            <person name="Dmytriyev A."/>
            <person name="Lundby C."/>
            <person name="Olsen J.V."/>
        </authorList>
    </citation>
    <scope>PHOSPHORYLATION [LARGE SCALE ANALYSIS] AT SER-319</scope>
    <scope>IDENTIFICATION BY MASS SPECTROMETRY [LARGE SCALE ANALYSIS]</scope>
</reference>